<organism>
    <name type="scientific">Granulibacter bethesdensis (strain ATCC BAA-1260 / CGDNIH1)</name>
    <dbReference type="NCBI Taxonomy" id="391165"/>
    <lineage>
        <taxon>Bacteria</taxon>
        <taxon>Pseudomonadati</taxon>
        <taxon>Pseudomonadota</taxon>
        <taxon>Alphaproteobacteria</taxon>
        <taxon>Acetobacterales</taxon>
        <taxon>Acetobacteraceae</taxon>
        <taxon>Granulibacter</taxon>
    </lineage>
</organism>
<dbReference type="EMBL" id="CP000394">
    <property type="protein sequence ID" value="ABI61983.1"/>
    <property type="molecule type" value="Genomic_DNA"/>
</dbReference>
<dbReference type="RefSeq" id="WP_011631792.1">
    <property type="nucleotide sequence ID" value="NC_008343.2"/>
</dbReference>
<dbReference type="SMR" id="Q0BT69"/>
<dbReference type="STRING" id="391165.GbCGDNIH1_1085"/>
<dbReference type="GeneID" id="69745344"/>
<dbReference type="KEGG" id="gbe:GbCGDNIH1_1085"/>
<dbReference type="eggNOG" id="COG0231">
    <property type="taxonomic scope" value="Bacteria"/>
</dbReference>
<dbReference type="HOGENOM" id="CLU_074944_1_1_5"/>
<dbReference type="OrthoDB" id="9801844at2"/>
<dbReference type="UniPathway" id="UPA00345"/>
<dbReference type="Proteomes" id="UP000001963">
    <property type="component" value="Chromosome"/>
</dbReference>
<dbReference type="GO" id="GO:0005737">
    <property type="term" value="C:cytoplasm"/>
    <property type="evidence" value="ECO:0007669"/>
    <property type="project" value="UniProtKB-SubCell"/>
</dbReference>
<dbReference type="GO" id="GO:0003746">
    <property type="term" value="F:translation elongation factor activity"/>
    <property type="evidence" value="ECO:0007669"/>
    <property type="project" value="UniProtKB-UniRule"/>
</dbReference>
<dbReference type="GO" id="GO:0043043">
    <property type="term" value="P:peptide biosynthetic process"/>
    <property type="evidence" value="ECO:0007669"/>
    <property type="project" value="InterPro"/>
</dbReference>
<dbReference type="CDD" id="cd04470">
    <property type="entry name" value="S1_EF-P_repeat_1"/>
    <property type="match status" value="1"/>
</dbReference>
<dbReference type="CDD" id="cd05794">
    <property type="entry name" value="S1_EF-P_repeat_2"/>
    <property type="match status" value="1"/>
</dbReference>
<dbReference type="FunFam" id="2.30.30.30:FF:000003">
    <property type="entry name" value="Elongation factor P"/>
    <property type="match status" value="1"/>
</dbReference>
<dbReference type="FunFam" id="2.40.50.140:FF:000004">
    <property type="entry name" value="Elongation factor P"/>
    <property type="match status" value="1"/>
</dbReference>
<dbReference type="FunFam" id="2.40.50.140:FF:000009">
    <property type="entry name" value="Elongation factor P"/>
    <property type="match status" value="1"/>
</dbReference>
<dbReference type="Gene3D" id="2.30.30.30">
    <property type="match status" value="1"/>
</dbReference>
<dbReference type="Gene3D" id="2.40.50.140">
    <property type="entry name" value="Nucleic acid-binding proteins"/>
    <property type="match status" value="2"/>
</dbReference>
<dbReference type="HAMAP" id="MF_00141">
    <property type="entry name" value="EF_P"/>
    <property type="match status" value="1"/>
</dbReference>
<dbReference type="InterPro" id="IPR015365">
    <property type="entry name" value="Elong-fact-P_C"/>
</dbReference>
<dbReference type="InterPro" id="IPR012340">
    <property type="entry name" value="NA-bd_OB-fold"/>
</dbReference>
<dbReference type="InterPro" id="IPR014722">
    <property type="entry name" value="Rib_uL2_dom2"/>
</dbReference>
<dbReference type="InterPro" id="IPR020599">
    <property type="entry name" value="Transl_elong_fac_P/YeiP"/>
</dbReference>
<dbReference type="InterPro" id="IPR013185">
    <property type="entry name" value="Transl_elong_KOW-like"/>
</dbReference>
<dbReference type="InterPro" id="IPR001059">
    <property type="entry name" value="Transl_elong_P/YeiP_cen"/>
</dbReference>
<dbReference type="InterPro" id="IPR013852">
    <property type="entry name" value="Transl_elong_P/YeiP_CS"/>
</dbReference>
<dbReference type="InterPro" id="IPR011768">
    <property type="entry name" value="Transl_elongation_fac_P"/>
</dbReference>
<dbReference type="InterPro" id="IPR008991">
    <property type="entry name" value="Translation_prot_SH3-like_sf"/>
</dbReference>
<dbReference type="NCBIfam" id="TIGR00038">
    <property type="entry name" value="efp"/>
    <property type="match status" value="1"/>
</dbReference>
<dbReference type="NCBIfam" id="NF001810">
    <property type="entry name" value="PRK00529.1"/>
    <property type="match status" value="1"/>
</dbReference>
<dbReference type="PANTHER" id="PTHR30053">
    <property type="entry name" value="ELONGATION FACTOR P"/>
    <property type="match status" value="1"/>
</dbReference>
<dbReference type="PANTHER" id="PTHR30053:SF14">
    <property type="entry name" value="TRANSLATION ELONGATION FACTOR KOW-LIKE DOMAIN-CONTAINING PROTEIN"/>
    <property type="match status" value="1"/>
</dbReference>
<dbReference type="Pfam" id="PF01132">
    <property type="entry name" value="EFP"/>
    <property type="match status" value="1"/>
</dbReference>
<dbReference type="Pfam" id="PF08207">
    <property type="entry name" value="EFP_N"/>
    <property type="match status" value="1"/>
</dbReference>
<dbReference type="Pfam" id="PF09285">
    <property type="entry name" value="Elong-fact-P_C"/>
    <property type="match status" value="1"/>
</dbReference>
<dbReference type="PIRSF" id="PIRSF005901">
    <property type="entry name" value="EF-P"/>
    <property type="match status" value="1"/>
</dbReference>
<dbReference type="SMART" id="SM01185">
    <property type="entry name" value="EFP"/>
    <property type="match status" value="1"/>
</dbReference>
<dbReference type="SMART" id="SM00841">
    <property type="entry name" value="Elong-fact-P_C"/>
    <property type="match status" value="1"/>
</dbReference>
<dbReference type="SUPFAM" id="SSF50249">
    <property type="entry name" value="Nucleic acid-binding proteins"/>
    <property type="match status" value="2"/>
</dbReference>
<dbReference type="SUPFAM" id="SSF50104">
    <property type="entry name" value="Translation proteins SH3-like domain"/>
    <property type="match status" value="1"/>
</dbReference>
<dbReference type="PROSITE" id="PS01275">
    <property type="entry name" value="EFP"/>
    <property type="match status" value="1"/>
</dbReference>
<proteinExistence type="inferred from homology"/>
<sequence length="187" mass="20875">MKQQANLIRAGQVIEHDGRRWTVLKQQIITPGKGGAFIQVEMRDLKTGNKTNERWRTADTVERLMTEEKDYTYSYTDGDNLVLMDPETFEQALIPAEILGDAVAFLQDNMQVTVDLVEGDPVAIHLPAQVTLEIVEADPVVKGQTASSSYKPAKLSNGVRVMVPPFIEAGERIVVRTEDSTYVERAK</sequence>
<reference key="1">
    <citation type="journal article" date="2007" name="J. Bacteriol.">
        <title>Genome sequence analysis of the emerging human pathogenic acetic acid bacterium Granulibacter bethesdensis.</title>
        <authorList>
            <person name="Greenberg D.E."/>
            <person name="Porcella S.F."/>
            <person name="Zelazny A.M."/>
            <person name="Virtaneva K."/>
            <person name="Sturdevant D.E."/>
            <person name="Kupko J.J. III"/>
            <person name="Barbian K.D."/>
            <person name="Babar A."/>
            <person name="Dorward D.W."/>
            <person name="Holland S.M."/>
        </authorList>
    </citation>
    <scope>NUCLEOTIDE SEQUENCE [LARGE SCALE GENOMIC DNA]</scope>
    <source>
        <strain>ATCC BAA-1260 / CGDNIH1</strain>
    </source>
</reference>
<protein>
    <recommendedName>
        <fullName evidence="1">Elongation factor P</fullName>
        <shortName evidence="1">EF-P</shortName>
    </recommendedName>
</protein>
<accession>Q0BT69</accession>
<gene>
    <name evidence="1" type="primary">efp</name>
    <name type="ordered locus">GbCGDNIH1_1085</name>
</gene>
<keyword id="KW-0963">Cytoplasm</keyword>
<keyword id="KW-0251">Elongation factor</keyword>
<keyword id="KW-0648">Protein biosynthesis</keyword>
<keyword id="KW-1185">Reference proteome</keyword>
<feature type="chain" id="PRO_1000010752" description="Elongation factor P">
    <location>
        <begin position="1"/>
        <end position="187"/>
    </location>
</feature>
<evidence type="ECO:0000255" key="1">
    <source>
        <dbReference type="HAMAP-Rule" id="MF_00141"/>
    </source>
</evidence>
<comment type="function">
    <text evidence="1">Involved in peptide bond synthesis. Stimulates efficient translation and peptide-bond synthesis on native or reconstituted 70S ribosomes in vitro. Probably functions indirectly by altering the affinity of the ribosome for aminoacyl-tRNA, thus increasing their reactivity as acceptors for peptidyl transferase.</text>
</comment>
<comment type="pathway">
    <text evidence="1">Protein biosynthesis; polypeptide chain elongation.</text>
</comment>
<comment type="subcellular location">
    <subcellularLocation>
        <location evidence="1">Cytoplasm</location>
    </subcellularLocation>
</comment>
<comment type="similarity">
    <text evidence="1">Belongs to the elongation factor P family.</text>
</comment>
<name>EFP_GRABC</name>